<keyword id="KW-0227">DNA damage</keyword>
<keyword id="KW-0234">DNA repair</keyword>
<keyword id="KW-0235">DNA replication</keyword>
<keyword id="KW-0436">Ligase</keyword>
<keyword id="KW-0460">Magnesium</keyword>
<keyword id="KW-0464">Manganese</keyword>
<keyword id="KW-0479">Metal-binding</keyword>
<keyword id="KW-0520">NAD</keyword>
<keyword id="KW-0862">Zinc</keyword>
<accession>B1YSH2</accession>
<proteinExistence type="inferred from homology"/>
<name>DNLJ_BURA4</name>
<protein>
    <recommendedName>
        <fullName evidence="1">DNA ligase</fullName>
        <ecNumber evidence="1">6.5.1.2</ecNumber>
    </recommendedName>
    <alternativeName>
        <fullName evidence="1">Polydeoxyribonucleotide synthase [NAD(+)]</fullName>
    </alternativeName>
</protein>
<feature type="chain" id="PRO_0000380322" description="DNA ligase">
    <location>
        <begin position="1"/>
        <end position="691"/>
    </location>
</feature>
<feature type="domain" description="BRCT" evidence="1">
    <location>
        <begin position="610"/>
        <end position="691"/>
    </location>
</feature>
<feature type="active site" description="N6-AMP-lysine intermediate" evidence="1">
    <location>
        <position position="132"/>
    </location>
</feature>
<feature type="binding site" evidence="1">
    <location>
        <begin position="41"/>
        <end position="45"/>
    </location>
    <ligand>
        <name>NAD(+)</name>
        <dbReference type="ChEBI" id="CHEBI:57540"/>
    </ligand>
</feature>
<feature type="binding site" evidence="1">
    <location>
        <begin position="90"/>
        <end position="91"/>
    </location>
    <ligand>
        <name>NAD(+)</name>
        <dbReference type="ChEBI" id="CHEBI:57540"/>
    </ligand>
</feature>
<feature type="binding site" evidence="1">
    <location>
        <position position="130"/>
    </location>
    <ligand>
        <name>NAD(+)</name>
        <dbReference type="ChEBI" id="CHEBI:57540"/>
    </ligand>
</feature>
<feature type="binding site" evidence="1">
    <location>
        <position position="153"/>
    </location>
    <ligand>
        <name>NAD(+)</name>
        <dbReference type="ChEBI" id="CHEBI:57540"/>
    </ligand>
</feature>
<feature type="binding site" evidence="1">
    <location>
        <position position="190"/>
    </location>
    <ligand>
        <name>NAD(+)</name>
        <dbReference type="ChEBI" id="CHEBI:57540"/>
    </ligand>
</feature>
<feature type="binding site" evidence="1">
    <location>
        <position position="307"/>
    </location>
    <ligand>
        <name>NAD(+)</name>
        <dbReference type="ChEBI" id="CHEBI:57540"/>
    </ligand>
</feature>
<feature type="binding site" evidence="1">
    <location>
        <position position="331"/>
    </location>
    <ligand>
        <name>NAD(+)</name>
        <dbReference type="ChEBI" id="CHEBI:57540"/>
    </ligand>
</feature>
<feature type="binding site" evidence="1">
    <location>
        <position position="425"/>
    </location>
    <ligand>
        <name>Zn(2+)</name>
        <dbReference type="ChEBI" id="CHEBI:29105"/>
    </ligand>
</feature>
<feature type="binding site" evidence="1">
    <location>
        <position position="428"/>
    </location>
    <ligand>
        <name>Zn(2+)</name>
        <dbReference type="ChEBI" id="CHEBI:29105"/>
    </ligand>
</feature>
<feature type="binding site" evidence="1">
    <location>
        <position position="443"/>
    </location>
    <ligand>
        <name>Zn(2+)</name>
        <dbReference type="ChEBI" id="CHEBI:29105"/>
    </ligand>
</feature>
<feature type="binding site" evidence="1">
    <location>
        <position position="449"/>
    </location>
    <ligand>
        <name>Zn(2+)</name>
        <dbReference type="ChEBI" id="CHEBI:29105"/>
    </ligand>
</feature>
<evidence type="ECO:0000255" key="1">
    <source>
        <dbReference type="HAMAP-Rule" id="MF_01588"/>
    </source>
</evidence>
<gene>
    <name evidence="1" type="primary">ligA</name>
    <name type="ordered locus">BamMC406_1926</name>
</gene>
<reference key="1">
    <citation type="submission" date="2008-04" db="EMBL/GenBank/DDBJ databases">
        <title>Complete sequence of chromosome 1 of Burkholderia ambifaria MC40-6.</title>
        <authorList>
            <person name="Copeland A."/>
            <person name="Lucas S."/>
            <person name="Lapidus A."/>
            <person name="Glavina del Rio T."/>
            <person name="Dalin E."/>
            <person name="Tice H."/>
            <person name="Pitluck S."/>
            <person name="Chain P."/>
            <person name="Malfatti S."/>
            <person name="Shin M."/>
            <person name="Vergez L."/>
            <person name="Lang D."/>
            <person name="Schmutz J."/>
            <person name="Larimer F."/>
            <person name="Land M."/>
            <person name="Hauser L."/>
            <person name="Kyrpides N."/>
            <person name="Lykidis A."/>
            <person name="Ramette A."/>
            <person name="Konstantinidis K."/>
            <person name="Tiedje J."/>
            <person name="Richardson P."/>
        </authorList>
    </citation>
    <scope>NUCLEOTIDE SEQUENCE [LARGE SCALE GENOMIC DNA]</scope>
    <source>
        <strain>MC40-6</strain>
    </source>
</reference>
<organism>
    <name type="scientific">Burkholderia ambifaria (strain MC40-6)</name>
    <dbReference type="NCBI Taxonomy" id="398577"/>
    <lineage>
        <taxon>Bacteria</taxon>
        <taxon>Pseudomonadati</taxon>
        <taxon>Pseudomonadota</taxon>
        <taxon>Betaproteobacteria</taxon>
        <taxon>Burkholderiales</taxon>
        <taxon>Burkholderiaceae</taxon>
        <taxon>Burkholderia</taxon>
        <taxon>Burkholderia cepacia complex</taxon>
    </lineage>
</organism>
<sequence>MARTQAEPPASQPDARAAWLRDQLERANYAYYVLDQPDLPDAEYDRLFGELQQLETDHPDLVTPDSPTQRVGGEVAGGFTPVVHDAPMLSLNNGFADEDIAAFDKRVADALGKTTDLAGSVTDPVEYACELKFDGLAISLRYEHGVFVQASTRGDGTTGEDVTENVRTIRSIPLKLKGAHVPALLDVRGEVLMFKRDFARLNERQRAAEQREFANPRNAAAGSLRQLDPKITAQRPLSFFAYGIGVLDGMPMPDTHSALLDWYESFGLPVNRERAVVYGADGLLGFFRKVGEKRESLPYDIDGVVYKVNRRDEQDRLGFVSRAPRFALAHKFPAQEALTRLVAIDVQVGRTGAITPVARLEPVFVGGATVTNATLHNEDEVRRKDIRIGDTVIVRRAGDVIPEVVGALLERRPDDAAEFVMPTECPVCGSKIERLPDEAIARCTGGLFCPAQRKQALWHFAQRRALDIDGLGEKIIDQLVELNLVRTPADLFNLGFATLAELDRFAEKSAQNLLDSLEKAKHTTLARFIYGLGIRHVGESTAKDLAKHFGSLTPIMDASIEELLEVNDVGPIVAESIHQFFAEEHNRTVIEQLRAPGKVTWPEGPPAPKAPQGVLAGKTVVLTGTLPNLTRDAAKEMLEAAGAKVAGSVSKKTDYVVAGADAGSKLAKAEELGIPVLDEDGLHQLLEGNTP</sequence>
<dbReference type="EC" id="6.5.1.2" evidence="1"/>
<dbReference type="EMBL" id="CP001025">
    <property type="protein sequence ID" value="ACB64408.1"/>
    <property type="molecule type" value="Genomic_DNA"/>
</dbReference>
<dbReference type="RefSeq" id="WP_012364138.1">
    <property type="nucleotide sequence ID" value="NC_010551.1"/>
</dbReference>
<dbReference type="SMR" id="B1YSH2"/>
<dbReference type="KEGG" id="bac:BamMC406_1926"/>
<dbReference type="HOGENOM" id="CLU_007764_2_1_4"/>
<dbReference type="OrthoDB" id="9759736at2"/>
<dbReference type="Proteomes" id="UP000001680">
    <property type="component" value="Chromosome 1"/>
</dbReference>
<dbReference type="GO" id="GO:0005829">
    <property type="term" value="C:cytosol"/>
    <property type="evidence" value="ECO:0007669"/>
    <property type="project" value="TreeGrafter"/>
</dbReference>
<dbReference type="GO" id="GO:0003677">
    <property type="term" value="F:DNA binding"/>
    <property type="evidence" value="ECO:0007669"/>
    <property type="project" value="InterPro"/>
</dbReference>
<dbReference type="GO" id="GO:0003911">
    <property type="term" value="F:DNA ligase (NAD+) activity"/>
    <property type="evidence" value="ECO:0007669"/>
    <property type="project" value="UniProtKB-UniRule"/>
</dbReference>
<dbReference type="GO" id="GO:0046872">
    <property type="term" value="F:metal ion binding"/>
    <property type="evidence" value="ECO:0007669"/>
    <property type="project" value="UniProtKB-KW"/>
</dbReference>
<dbReference type="GO" id="GO:0006281">
    <property type="term" value="P:DNA repair"/>
    <property type="evidence" value="ECO:0007669"/>
    <property type="project" value="UniProtKB-KW"/>
</dbReference>
<dbReference type="GO" id="GO:0006260">
    <property type="term" value="P:DNA replication"/>
    <property type="evidence" value="ECO:0007669"/>
    <property type="project" value="UniProtKB-KW"/>
</dbReference>
<dbReference type="CDD" id="cd17748">
    <property type="entry name" value="BRCT_DNA_ligase_like"/>
    <property type="match status" value="1"/>
</dbReference>
<dbReference type="CDD" id="cd00114">
    <property type="entry name" value="LIGANc"/>
    <property type="match status" value="1"/>
</dbReference>
<dbReference type="FunFam" id="1.10.150.20:FF:000006">
    <property type="entry name" value="DNA ligase"/>
    <property type="match status" value="1"/>
</dbReference>
<dbReference type="FunFam" id="1.10.150.20:FF:000007">
    <property type="entry name" value="DNA ligase"/>
    <property type="match status" value="1"/>
</dbReference>
<dbReference type="FunFam" id="1.10.287.610:FF:000002">
    <property type="entry name" value="DNA ligase"/>
    <property type="match status" value="1"/>
</dbReference>
<dbReference type="FunFam" id="2.40.50.140:FF:000012">
    <property type="entry name" value="DNA ligase"/>
    <property type="match status" value="1"/>
</dbReference>
<dbReference type="FunFam" id="3.30.470.30:FF:000001">
    <property type="entry name" value="DNA ligase"/>
    <property type="match status" value="1"/>
</dbReference>
<dbReference type="FunFam" id="3.40.50.10190:FF:000054">
    <property type="entry name" value="DNA ligase"/>
    <property type="match status" value="1"/>
</dbReference>
<dbReference type="Gene3D" id="6.20.10.30">
    <property type="match status" value="1"/>
</dbReference>
<dbReference type="Gene3D" id="1.10.150.20">
    <property type="entry name" value="5' to 3' exonuclease, C-terminal subdomain"/>
    <property type="match status" value="2"/>
</dbReference>
<dbReference type="Gene3D" id="3.40.50.10190">
    <property type="entry name" value="BRCT domain"/>
    <property type="match status" value="1"/>
</dbReference>
<dbReference type="Gene3D" id="3.30.470.30">
    <property type="entry name" value="DNA ligase/mRNA capping enzyme"/>
    <property type="match status" value="1"/>
</dbReference>
<dbReference type="Gene3D" id="1.10.287.610">
    <property type="entry name" value="Helix hairpin bin"/>
    <property type="match status" value="1"/>
</dbReference>
<dbReference type="Gene3D" id="2.40.50.140">
    <property type="entry name" value="Nucleic acid-binding proteins"/>
    <property type="match status" value="1"/>
</dbReference>
<dbReference type="HAMAP" id="MF_01588">
    <property type="entry name" value="DNA_ligase_A"/>
    <property type="match status" value="1"/>
</dbReference>
<dbReference type="InterPro" id="IPR001357">
    <property type="entry name" value="BRCT_dom"/>
</dbReference>
<dbReference type="InterPro" id="IPR036420">
    <property type="entry name" value="BRCT_dom_sf"/>
</dbReference>
<dbReference type="InterPro" id="IPR041663">
    <property type="entry name" value="DisA/LigA_HHH"/>
</dbReference>
<dbReference type="InterPro" id="IPR001679">
    <property type="entry name" value="DNA_ligase"/>
</dbReference>
<dbReference type="InterPro" id="IPR018239">
    <property type="entry name" value="DNA_ligase_AS"/>
</dbReference>
<dbReference type="InterPro" id="IPR033136">
    <property type="entry name" value="DNA_ligase_CS"/>
</dbReference>
<dbReference type="InterPro" id="IPR013839">
    <property type="entry name" value="DNAligase_adenylation"/>
</dbReference>
<dbReference type="InterPro" id="IPR013840">
    <property type="entry name" value="DNAligase_N"/>
</dbReference>
<dbReference type="InterPro" id="IPR003583">
    <property type="entry name" value="Hlx-hairpin-Hlx_DNA-bd_motif"/>
</dbReference>
<dbReference type="InterPro" id="IPR012340">
    <property type="entry name" value="NA-bd_OB-fold"/>
</dbReference>
<dbReference type="InterPro" id="IPR004150">
    <property type="entry name" value="NAD_DNA_ligase_OB"/>
</dbReference>
<dbReference type="InterPro" id="IPR010994">
    <property type="entry name" value="RuvA_2-like"/>
</dbReference>
<dbReference type="InterPro" id="IPR004149">
    <property type="entry name" value="Znf_DNAligase_C4"/>
</dbReference>
<dbReference type="NCBIfam" id="TIGR00575">
    <property type="entry name" value="dnlj"/>
    <property type="match status" value="1"/>
</dbReference>
<dbReference type="NCBIfam" id="NF005932">
    <property type="entry name" value="PRK07956.1"/>
    <property type="match status" value="1"/>
</dbReference>
<dbReference type="PANTHER" id="PTHR23389">
    <property type="entry name" value="CHROMOSOME TRANSMISSION FIDELITY FACTOR 18"/>
    <property type="match status" value="1"/>
</dbReference>
<dbReference type="PANTHER" id="PTHR23389:SF9">
    <property type="entry name" value="DNA LIGASE"/>
    <property type="match status" value="1"/>
</dbReference>
<dbReference type="Pfam" id="PF00533">
    <property type="entry name" value="BRCT"/>
    <property type="match status" value="1"/>
</dbReference>
<dbReference type="Pfam" id="PF01653">
    <property type="entry name" value="DNA_ligase_aden"/>
    <property type="match status" value="1"/>
</dbReference>
<dbReference type="Pfam" id="PF03120">
    <property type="entry name" value="DNA_ligase_OB"/>
    <property type="match status" value="1"/>
</dbReference>
<dbReference type="Pfam" id="PF03119">
    <property type="entry name" value="DNA_ligase_ZBD"/>
    <property type="match status" value="1"/>
</dbReference>
<dbReference type="Pfam" id="PF12826">
    <property type="entry name" value="HHH_2"/>
    <property type="match status" value="1"/>
</dbReference>
<dbReference type="Pfam" id="PF14520">
    <property type="entry name" value="HHH_5"/>
    <property type="match status" value="1"/>
</dbReference>
<dbReference type="Pfam" id="PF22745">
    <property type="entry name" value="Nlig-Ia"/>
    <property type="match status" value="1"/>
</dbReference>
<dbReference type="PIRSF" id="PIRSF001604">
    <property type="entry name" value="LigA"/>
    <property type="match status" value="1"/>
</dbReference>
<dbReference type="SMART" id="SM00292">
    <property type="entry name" value="BRCT"/>
    <property type="match status" value="1"/>
</dbReference>
<dbReference type="SMART" id="SM00278">
    <property type="entry name" value="HhH1"/>
    <property type="match status" value="3"/>
</dbReference>
<dbReference type="SMART" id="SM00532">
    <property type="entry name" value="LIGANc"/>
    <property type="match status" value="1"/>
</dbReference>
<dbReference type="SUPFAM" id="SSF52113">
    <property type="entry name" value="BRCT domain"/>
    <property type="match status" value="1"/>
</dbReference>
<dbReference type="SUPFAM" id="SSF56091">
    <property type="entry name" value="DNA ligase/mRNA capping enzyme, catalytic domain"/>
    <property type="match status" value="1"/>
</dbReference>
<dbReference type="SUPFAM" id="SSF50249">
    <property type="entry name" value="Nucleic acid-binding proteins"/>
    <property type="match status" value="1"/>
</dbReference>
<dbReference type="SUPFAM" id="SSF47781">
    <property type="entry name" value="RuvA domain 2-like"/>
    <property type="match status" value="1"/>
</dbReference>
<dbReference type="PROSITE" id="PS50172">
    <property type="entry name" value="BRCT"/>
    <property type="match status" value="1"/>
</dbReference>
<dbReference type="PROSITE" id="PS01055">
    <property type="entry name" value="DNA_LIGASE_N1"/>
    <property type="match status" value="1"/>
</dbReference>
<dbReference type="PROSITE" id="PS01056">
    <property type="entry name" value="DNA_LIGASE_N2"/>
    <property type="match status" value="1"/>
</dbReference>
<comment type="function">
    <text evidence="1">DNA ligase that catalyzes the formation of phosphodiester linkages between 5'-phosphoryl and 3'-hydroxyl groups in double-stranded DNA using NAD as a coenzyme and as the energy source for the reaction. It is essential for DNA replication and repair of damaged DNA.</text>
</comment>
<comment type="catalytic activity">
    <reaction evidence="1">
        <text>NAD(+) + (deoxyribonucleotide)n-3'-hydroxyl + 5'-phospho-(deoxyribonucleotide)m = (deoxyribonucleotide)n+m + AMP + beta-nicotinamide D-nucleotide.</text>
        <dbReference type="EC" id="6.5.1.2"/>
    </reaction>
</comment>
<comment type="cofactor">
    <cofactor evidence="1">
        <name>Mg(2+)</name>
        <dbReference type="ChEBI" id="CHEBI:18420"/>
    </cofactor>
    <cofactor evidence="1">
        <name>Mn(2+)</name>
        <dbReference type="ChEBI" id="CHEBI:29035"/>
    </cofactor>
</comment>
<comment type="similarity">
    <text evidence="1">Belongs to the NAD-dependent DNA ligase family. LigA subfamily.</text>
</comment>